<keyword id="KW-0378">Hydrolase</keyword>
<organism>
    <name type="scientific">Rhodopseudomonas palustris (strain ATCC BAA-98 / CGA009)</name>
    <dbReference type="NCBI Taxonomy" id="258594"/>
    <lineage>
        <taxon>Bacteria</taxon>
        <taxon>Pseudomonadati</taxon>
        <taxon>Pseudomonadota</taxon>
        <taxon>Alphaproteobacteria</taxon>
        <taxon>Hyphomicrobiales</taxon>
        <taxon>Nitrobacteraceae</taxon>
        <taxon>Rhodopseudomonas</taxon>
    </lineage>
</organism>
<name>RPPH_RHOPA</name>
<comment type="function">
    <text evidence="1">Accelerates the degradation of transcripts by removing pyrophosphate from the 5'-end of triphosphorylated RNA, leading to a more labile monophosphorylated state that can stimulate subsequent ribonuclease cleavage.</text>
</comment>
<comment type="cofactor">
    <cofactor evidence="1">
        <name>a divalent metal cation</name>
        <dbReference type="ChEBI" id="CHEBI:60240"/>
    </cofactor>
</comment>
<comment type="similarity">
    <text evidence="1">Belongs to the Nudix hydrolase family. RppH subfamily.</text>
</comment>
<protein>
    <recommendedName>
        <fullName evidence="1">RNA pyrophosphohydrolase</fullName>
        <ecNumber evidence="1">3.6.1.-</ecNumber>
    </recommendedName>
    <alternativeName>
        <fullName evidence="1">(Di)nucleoside polyphosphate hydrolase</fullName>
    </alternativeName>
</protein>
<sequence>MARYEDLPYRTCVGVMLINREGLVFIGRRAGGIEHVDDTHVWQMPQGGVDPGEDTWKAAKRELYEETSVNSVEKLAEVPDWLIYDIPRTVAGRAWKGRYRGQRQKWFAARFTGADSEINVVHPGGGHKAEFTSWRWEPMHNLPELIVPFKRPVYERVVKEFSQLAAAV</sequence>
<feature type="chain" id="PRO_0000057023" description="RNA pyrophosphohydrolase">
    <location>
        <begin position="1"/>
        <end position="168"/>
    </location>
</feature>
<feature type="domain" description="Nudix hydrolase" evidence="1">
    <location>
        <begin position="8"/>
        <end position="159"/>
    </location>
</feature>
<feature type="short sequence motif" description="Nudix box">
    <location>
        <begin position="47"/>
        <end position="68"/>
    </location>
</feature>
<evidence type="ECO:0000255" key="1">
    <source>
        <dbReference type="HAMAP-Rule" id="MF_00298"/>
    </source>
</evidence>
<accession>P61786</accession>
<dbReference type="EC" id="3.6.1.-" evidence="1"/>
<dbReference type="EMBL" id="BX572593">
    <property type="protein sequence ID" value="CAE25615.1"/>
    <property type="molecule type" value="Genomic_DNA"/>
</dbReference>
<dbReference type="RefSeq" id="WP_011155739.1">
    <property type="nucleotide sequence ID" value="NZ_CP116810.1"/>
</dbReference>
<dbReference type="SMR" id="P61786"/>
<dbReference type="STRING" id="258594.RPA0171"/>
<dbReference type="GeneID" id="66891176"/>
<dbReference type="eggNOG" id="COG0494">
    <property type="taxonomic scope" value="Bacteria"/>
</dbReference>
<dbReference type="HOGENOM" id="CLU_087195_3_0_5"/>
<dbReference type="PhylomeDB" id="P61786"/>
<dbReference type="GO" id="GO:0034432">
    <property type="term" value="F:bis(5'-adenosyl)-pentaphosphatase activity"/>
    <property type="evidence" value="ECO:0007669"/>
    <property type="project" value="TreeGrafter"/>
</dbReference>
<dbReference type="GO" id="GO:0008893">
    <property type="term" value="F:guanosine-3',5'-bis(diphosphate) 3'-diphosphatase activity"/>
    <property type="evidence" value="ECO:0007669"/>
    <property type="project" value="TreeGrafter"/>
</dbReference>
<dbReference type="GO" id="GO:0006753">
    <property type="term" value="P:nucleoside phosphate metabolic process"/>
    <property type="evidence" value="ECO:0007669"/>
    <property type="project" value="TreeGrafter"/>
</dbReference>
<dbReference type="GO" id="GO:0019693">
    <property type="term" value="P:ribose phosphate metabolic process"/>
    <property type="evidence" value="ECO:0007669"/>
    <property type="project" value="TreeGrafter"/>
</dbReference>
<dbReference type="CDD" id="cd03671">
    <property type="entry name" value="NUDIX_Ap4A_hydrolase_plant_like"/>
    <property type="match status" value="1"/>
</dbReference>
<dbReference type="Gene3D" id="3.90.79.10">
    <property type="entry name" value="Nucleoside Triphosphate Pyrophosphohydrolase"/>
    <property type="match status" value="1"/>
</dbReference>
<dbReference type="HAMAP" id="MF_00298">
    <property type="entry name" value="Nudix_RppH"/>
    <property type="match status" value="1"/>
</dbReference>
<dbReference type="InterPro" id="IPR015797">
    <property type="entry name" value="NUDIX_hydrolase-like_dom_sf"/>
</dbReference>
<dbReference type="InterPro" id="IPR000086">
    <property type="entry name" value="NUDIX_hydrolase_dom"/>
</dbReference>
<dbReference type="InterPro" id="IPR022927">
    <property type="entry name" value="RppH"/>
</dbReference>
<dbReference type="NCBIfam" id="NF001938">
    <property type="entry name" value="PRK00714.1-5"/>
    <property type="match status" value="1"/>
</dbReference>
<dbReference type="PANTHER" id="PTHR11839:SF22">
    <property type="entry name" value="NUDIX HYDROLASE 26, CHLOROPLASTIC"/>
    <property type="match status" value="1"/>
</dbReference>
<dbReference type="PANTHER" id="PTHR11839">
    <property type="entry name" value="UDP/ADP-SUGAR PYROPHOSPHATASE"/>
    <property type="match status" value="1"/>
</dbReference>
<dbReference type="Pfam" id="PF00293">
    <property type="entry name" value="NUDIX"/>
    <property type="match status" value="1"/>
</dbReference>
<dbReference type="SUPFAM" id="SSF55811">
    <property type="entry name" value="Nudix"/>
    <property type="match status" value="1"/>
</dbReference>
<dbReference type="PROSITE" id="PS51462">
    <property type="entry name" value="NUDIX"/>
    <property type="match status" value="1"/>
</dbReference>
<gene>
    <name evidence="1" type="primary">rppH</name>
    <name type="synonym">invA1</name>
    <name evidence="1" type="synonym">nudH</name>
    <name type="ordered locus">RPA0171</name>
</gene>
<reference key="1">
    <citation type="journal article" date="2004" name="Nat. Biotechnol.">
        <title>Complete genome sequence of the metabolically versatile photosynthetic bacterium Rhodopseudomonas palustris.</title>
        <authorList>
            <person name="Larimer F.W."/>
            <person name="Chain P."/>
            <person name="Hauser L."/>
            <person name="Lamerdin J.E."/>
            <person name="Malfatti S."/>
            <person name="Do L."/>
            <person name="Land M.L."/>
            <person name="Pelletier D.A."/>
            <person name="Beatty J.T."/>
            <person name="Lang A.S."/>
            <person name="Tabita F.R."/>
            <person name="Gibson J.L."/>
            <person name="Hanson T.E."/>
            <person name="Bobst C."/>
            <person name="Torres y Torres J.L."/>
            <person name="Peres C."/>
            <person name="Harrison F.H."/>
            <person name="Gibson J."/>
            <person name="Harwood C.S."/>
        </authorList>
    </citation>
    <scope>NUCLEOTIDE SEQUENCE [LARGE SCALE GENOMIC DNA]</scope>
    <source>
        <strain>ATCC BAA-98 / CGA009</strain>
    </source>
</reference>
<proteinExistence type="inferred from homology"/>